<sequence>MDKFRVYGQSRLSGSVNISGAKNAALPILFAVILATEPVKLTNVPELKDIETTLNILRQLGVIANRDETGAVLLDASNINHFTAPYELVKTMRASIWALAPLVARFHQGQVSLPGGCSIGARPVDLHISGLEKLGADIVLEEGYVKAQVSDRLVGTRIVIEKVSVGATLSIMMAATLAKGTTVIENAAREPEIVDTADFLNKMGAKISGAGSDHITIEGVERLTGCEHSVVPDRIETGTFLIAAAISGGRVVCQNTKADTLDAVIDKLREAGAQVDVTENSITLDMLGNRPKAVNIRTAPHPGFPTDMQAQFTLLNMVAEGTSIITETIFENRFMHIPELIRMGGKAEIEGNTAVCHGVEQLSGTEVIATDLRASISLVLAGCIATGETIVDRIYHIDRGYEHIEDKLRGLGAKIERFSGSDEA</sequence>
<protein>
    <recommendedName>
        <fullName evidence="1">UDP-N-acetylglucosamine 1-carboxyvinyltransferase</fullName>
        <ecNumber evidence="1">2.5.1.7</ecNumber>
    </recommendedName>
    <alternativeName>
        <fullName evidence="1">Enoylpyruvate transferase</fullName>
    </alternativeName>
    <alternativeName>
        <fullName evidence="1">UDP-N-acetylglucosamine enolpyruvyl transferase</fullName>
        <shortName evidence="1">EPT</shortName>
    </alternativeName>
</protein>
<organism>
    <name type="scientific">Haemophilus influenzae (strain PittGG)</name>
    <dbReference type="NCBI Taxonomy" id="374931"/>
    <lineage>
        <taxon>Bacteria</taxon>
        <taxon>Pseudomonadati</taxon>
        <taxon>Pseudomonadota</taxon>
        <taxon>Gammaproteobacteria</taxon>
        <taxon>Pasteurellales</taxon>
        <taxon>Pasteurellaceae</taxon>
        <taxon>Haemophilus</taxon>
    </lineage>
</organism>
<feature type="chain" id="PRO_1000023039" description="UDP-N-acetylglucosamine 1-carboxyvinyltransferase">
    <location>
        <begin position="1"/>
        <end position="424"/>
    </location>
</feature>
<feature type="active site" description="Proton donor" evidence="1">
    <location>
        <position position="117"/>
    </location>
</feature>
<feature type="binding site" evidence="1">
    <location>
        <begin position="22"/>
        <end position="23"/>
    </location>
    <ligand>
        <name>phosphoenolpyruvate</name>
        <dbReference type="ChEBI" id="CHEBI:58702"/>
    </ligand>
</feature>
<feature type="binding site" evidence="1">
    <location>
        <position position="93"/>
    </location>
    <ligand>
        <name>UDP-N-acetyl-alpha-D-glucosamine</name>
        <dbReference type="ChEBI" id="CHEBI:57705"/>
    </ligand>
</feature>
<feature type="binding site" evidence="1">
    <location>
        <begin position="122"/>
        <end position="126"/>
    </location>
    <ligand>
        <name>UDP-N-acetyl-alpha-D-glucosamine</name>
        <dbReference type="ChEBI" id="CHEBI:57705"/>
    </ligand>
</feature>
<feature type="binding site" evidence="1">
    <location>
        <begin position="162"/>
        <end position="165"/>
    </location>
    <ligand>
        <name>UDP-N-acetyl-alpha-D-glucosamine</name>
        <dbReference type="ChEBI" id="CHEBI:57705"/>
    </ligand>
</feature>
<feature type="binding site" evidence="1">
    <location>
        <position position="307"/>
    </location>
    <ligand>
        <name>UDP-N-acetyl-alpha-D-glucosamine</name>
        <dbReference type="ChEBI" id="CHEBI:57705"/>
    </ligand>
</feature>
<feature type="binding site" evidence="1">
    <location>
        <position position="329"/>
    </location>
    <ligand>
        <name>UDP-N-acetyl-alpha-D-glucosamine</name>
        <dbReference type="ChEBI" id="CHEBI:57705"/>
    </ligand>
</feature>
<feature type="modified residue" description="2-(S-cysteinyl)pyruvic acid O-phosphothioketal" evidence="1">
    <location>
        <position position="117"/>
    </location>
</feature>
<accession>A5UIK7</accession>
<keyword id="KW-0131">Cell cycle</keyword>
<keyword id="KW-0132">Cell division</keyword>
<keyword id="KW-0133">Cell shape</keyword>
<keyword id="KW-0961">Cell wall biogenesis/degradation</keyword>
<keyword id="KW-0963">Cytoplasm</keyword>
<keyword id="KW-0573">Peptidoglycan synthesis</keyword>
<keyword id="KW-0670">Pyruvate</keyword>
<keyword id="KW-0808">Transferase</keyword>
<reference key="1">
    <citation type="journal article" date="2007" name="Genome Biol.">
        <title>Characterization and modeling of the Haemophilus influenzae core and supragenomes based on the complete genomic sequences of Rd and 12 clinical nontypeable strains.</title>
        <authorList>
            <person name="Hogg J.S."/>
            <person name="Hu F.Z."/>
            <person name="Janto B."/>
            <person name="Boissy R."/>
            <person name="Hayes J."/>
            <person name="Keefe R."/>
            <person name="Post J.C."/>
            <person name="Ehrlich G.D."/>
        </authorList>
    </citation>
    <scope>NUCLEOTIDE SEQUENCE [LARGE SCALE GENOMIC DNA]</scope>
    <source>
        <strain>PittGG</strain>
    </source>
</reference>
<proteinExistence type="inferred from homology"/>
<name>MURA_HAEIG</name>
<gene>
    <name evidence="1" type="primary">murA</name>
    <name type="ordered locus">CGSHiGG_09045</name>
</gene>
<evidence type="ECO:0000255" key="1">
    <source>
        <dbReference type="HAMAP-Rule" id="MF_00111"/>
    </source>
</evidence>
<dbReference type="EC" id="2.5.1.7" evidence="1"/>
<dbReference type="EMBL" id="CP000672">
    <property type="protein sequence ID" value="ABR00613.1"/>
    <property type="molecule type" value="Genomic_DNA"/>
</dbReference>
<dbReference type="SMR" id="A5UIK7"/>
<dbReference type="KEGG" id="hiq:CGSHiGG_09045"/>
<dbReference type="HOGENOM" id="CLU_027387_0_0_6"/>
<dbReference type="UniPathway" id="UPA00219"/>
<dbReference type="Proteomes" id="UP000001990">
    <property type="component" value="Chromosome"/>
</dbReference>
<dbReference type="GO" id="GO:0005737">
    <property type="term" value="C:cytoplasm"/>
    <property type="evidence" value="ECO:0007669"/>
    <property type="project" value="UniProtKB-SubCell"/>
</dbReference>
<dbReference type="GO" id="GO:0008760">
    <property type="term" value="F:UDP-N-acetylglucosamine 1-carboxyvinyltransferase activity"/>
    <property type="evidence" value="ECO:0007669"/>
    <property type="project" value="UniProtKB-UniRule"/>
</dbReference>
<dbReference type="GO" id="GO:0051301">
    <property type="term" value="P:cell division"/>
    <property type="evidence" value="ECO:0007669"/>
    <property type="project" value="UniProtKB-KW"/>
</dbReference>
<dbReference type="GO" id="GO:0071555">
    <property type="term" value="P:cell wall organization"/>
    <property type="evidence" value="ECO:0007669"/>
    <property type="project" value="UniProtKB-KW"/>
</dbReference>
<dbReference type="GO" id="GO:0009252">
    <property type="term" value="P:peptidoglycan biosynthetic process"/>
    <property type="evidence" value="ECO:0007669"/>
    <property type="project" value="UniProtKB-UniRule"/>
</dbReference>
<dbReference type="GO" id="GO:0008360">
    <property type="term" value="P:regulation of cell shape"/>
    <property type="evidence" value="ECO:0007669"/>
    <property type="project" value="UniProtKB-KW"/>
</dbReference>
<dbReference type="GO" id="GO:0019277">
    <property type="term" value="P:UDP-N-acetylgalactosamine biosynthetic process"/>
    <property type="evidence" value="ECO:0007669"/>
    <property type="project" value="InterPro"/>
</dbReference>
<dbReference type="CDD" id="cd01555">
    <property type="entry name" value="UdpNAET"/>
    <property type="match status" value="1"/>
</dbReference>
<dbReference type="FunFam" id="3.65.10.10:FF:000002">
    <property type="entry name" value="UDP-N-acetylglucosamine 1-carboxyvinyltransferase"/>
    <property type="match status" value="1"/>
</dbReference>
<dbReference type="Gene3D" id="3.65.10.10">
    <property type="entry name" value="Enolpyruvate transferase domain"/>
    <property type="match status" value="2"/>
</dbReference>
<dbReference type="HAMAP" id="MF_00111">
    <property type="entry name" value="MurA"/>
    <property type="match status" value="1"/>
</dbReference>
<dbReference type="InterPro" id="IPR001986">
    <property type="entry name" value="Enolpyruvate_Tfrase_dom"/>
</dbReference>
<dbReference type="InterPro" id="IPR036968">
    <property type="entry name" value="Enolpyruvate_Tfrase_sf"/>
</dbReference>
<dbReference type="InterPro" id="IPR050068">
    <property type="entry name" value="MurA_subfamily"/>
</dbReference>
<dbReference type="InterPro" id="IPR013792">
    <property type="entry name" value="RNA3'P_cycl/enolpyr_Trfase_a/b"/>
</dbReference>
<dbReference type="InterPro" id="IPR005750">
    <property type="entry name" value="UDP_GlcNAc_COvinyl_MurA"/>
</dbReference>
<dbReference type="NCBIfam" id="TIGR01072">
    <property type="entry name" value="murA"/>
    <property type="match status" value="1"/>
</dbReference>
<dbReference type="NCBIfam" id="NF006873">
    <property type="entry name" value="PRK09369.1"/>
    <property type="match status" value="1"/>
</dbReference>
<dbReference type="PANTHER" id="PTHR43783">
    <property type="entry name" value="UDP-N-ACETYLGLUCOSAMINE 1-CARBOXYVINYLTRANSFERASE"/>
    <property type="match status" value="1"/>
</dbReference>
<dbReference type="PANTHER" id="PTHR43783:SF1">
    <property type="entry name" value="UDP-N-ACETYLGLUCOSAMINE 1-CARBOXYVINYLTRANSFERASE"/>
    <property type="match status" value="1"/>
</dbReference>
<dbReference type="Pfam" id="PF00275">
    <property type="entry name" value="EPSP_synthase"/>
    <property type="match status" value="1"/>
</dbReference>
<dbReference type="SUPFAM" id="SSF55205">
    <property type="entry name" value="EPT/RTPC-like"/>
    <property type="match status" value="1"/>
</dbReference>
<comment type="function">
    <text evidence="1">Cell wall formation. Adds enolpyruvyl to UDP-N-acetylglucosamine.</text>
</comment>
<comment type="catalytic activity">
    <reaction evidence="1">
        <text>phosphoenolpyruvate + UDP-N-acetyl-alpha-D-glucosamine = UDP-N-acetyl-3-O-(1-carboxyvinyl)-alpha-D-glucosamine + phosphate</text>
        <dbReference type="Rhea" id="RHEA:18681"/>
        <dbReference type="ChEBI" id="CHEBI:43474"/>
        <dbReference type="ChEBI" id="CHEBI:57705"/>
        <dbReference type="ChEBI" id="CHEBI:58702"/>
        <dbReference type="ChEBI" id="CHEBI:68483"/>
        <dbReference type="EC" id="2.5.1.7"/>
    </reaction>
</comment>
<comment type="pathway">
    <text evidence="1">Cell wall biogenesis; peptidoglycan biosynthesis.</text>
</comment>
<comment type="subcellular location">
    <subcellularLocation>
        <location evidence="1">Cytoplasm</location>
    </subcellularLocation>
</comment>
<comment type="similarity">
    <text evidence="1">Belongs to the EPSP synthase family. MurA subfamily.</text>
</comment>